<sequence length="207" mass="22158">MTQSQALRVGIGGPVGSGKTALTLALCRALRDKYNIAVVTNDIYTAEDAQFLVRNEALAPDRIIGVETGGCPHTAIREDASINLEAVDRLNQRFPGLEIIFVESGGDNLAATFSPELSDLTLYVIDVSAGDKIPRKGGPGITKSDLLVINKIDLAPMVGASLEVMDRDARKMRGERPFIFSNLKTGQGLAEIIAFIETQGLLRPHAG</sequence>
<comment type="function">
    <text evidence="1">Facilitates the functional incorporation of the urease nickel metallocenter. This process requires GTP hydrolysis, probably effectuated by UreG.</text>
</comment>
<comment type="subunit">
    <text evidence="1">Homodimer. UreD, UreF and UreG form a complex that acts as a GTP-hydrolysis-dependent molecular chaperone, activating the urease apoprotein by helping to assemble the nickel containing metallocenter of UreC. The UreE protein probably delivers the nickel.</text>
</comment>
<comment type="subcellular location">
    <subcellularLocation>
        <location evidence="1">Cytoplasm</location>
    </subcellularLocation>
</comment>
<comment type="similarity">
    <text evidence="1">Belongs to the SIMIBI class G3E GTPase family. UreG subfamily.</text>
</comment>
<proteinExistence type="inferred from homology"/>
<reference key="1">
    <citation type="journal article" date="2006" name="Nat. Biotechnol.">
        <title>Complete genome of the mutualistic, N2-fixing grass endophyte Azoarcus sp. strain BH72.</title>
        <authorList>
            <person name="Krause A."/>
            <person name="Ramakumar A."/>
            <person name="Bartels D."/>
            <person name="Battistoni F."/>
            <person name="Bekel T."/>
            <person name="Boch J."/>
            <person name="Boehm M."/>
            <person name="Friedrich F."/>
            <person name="Hurek T."/>
            <person name="Krause L."/>
            <person name="Linke B."/>
            <person name="McHardy A.C."/>
            <person name="Sarkar A."/>
            <person name="Schneiker S."/>
            <person name="Syed A.A."/>
            <person name="Thauer R."/>
            <person name="Vorhoelter F.-J."/>
            <person name="Weidner S."/>
            <person name="Puehler A."/>
            <person name="Reinhold-Hurek B."/>
            <person name="Kaiser O."/>
            <person name="Goesmann A."/>
        </authorList>
    </citation>
    <scope>NUCLEOTIDE SEQUENCE [LARGE SCALE GENOMIC DNA]</scope>
    <source>
        <strain>BH72</strain>
    </source>
</reference>
<name>UREG_AZOSB</name>
<feature type="chain" id="PRO_1000145165" description="Urease accessory protein UreG">
    <location>
        <begin position="1"/>
        <end position="207"/>
    </location>
</feature>
<feature type="binding site" evidence="1">
    <location>
        <begin position="13"/>
        <end position="20"/>
    </location>
    <ligand>
        <name>GTP</name>
        <dbReference type="ChEBI" id="CHEBI:37565"/>
    </ligand>
</feature>
<keyword id="KW-0143">Chaperone</keyword>
<keyword id="KW-0963">Cytoplasm</keyword>
<keyword id="KW-0342">GTP-binding</keyword>
<keyword id="KW-0996">Nickel insertion</keyword>
<keyword id="KW-0547">Nucleotide-binding</keyword>
<keyword id="KW-1185">Reference proteome</keyword>
<gene>
    <name evidence="1" type="primary">ureG</name>
    <name type="ordered locus">azo3501</name>
</gene>
<evidence type="ECO:0000255" key="1">
    <source>
        <dbReference type="HAMAP-Rule" id="MF_01389"/>
    </source>
</evidence>
<dbReference type="EMBL" id="AM406670">
    <property type="protein sequence ID" value="CAL96117.1"/>
    <property type="molecule type" value="Genomic_DNA"/>
</dbReference>
<dbReference type="RefSeq" id="WP_011767223.1">
    <property type="nucleotide sequence ID" value="NC_008702.1"/>
</dbReference>
<dbReference type="SMR" id="A1KBB1"/>
<dbReference type="STRING" id="62928.azo3501"/>
<dbReference type="KEGG" id="aoa:dqs_3644"/>
<dbReference type="KEGG" id="azo:azo3501"/>
<dbReference type="eggNOG" id="COG0378">
    <property type="taxonomic scope" value="Bacteria"/>
</dbReference>
<dbReference type="HOGENOM" id="CLU_072144_1_0_4"/>
<dbReference type="OrthoDB" id="9802035at2"/>
<dbReference type="Proteomes" id="UP000002588">
    <property type="component" value="Chromosome"/>
</dbReference>
<dbReference type="GO" id="GO:0005737">
    <property type="term" value="C:cytoplasm"/>
    <property type="evidence" value="ECO:0007669"/>
    <property type="project" value="UniProtKB-SubCell"/>
</dbReference>
<dbReference type="GO" id="GO:0005525">
    <property type="term" value="F:GTP binding"/>
    <property type="evidence" value="ECO:0007669"/>
    <property type="project" value="UniProtKB-KW"/>
</dbReference>
<dbReference type="GO" id="GO:0003924">
    <property type="term" value="F:GTPase activity"/>
    <property type="evidence" value="ECO:0007669"/>
    <property type="project" value="InterPro"/>
</dbReference>
<dbReference type="GO" id="GO:0016151">
    <property type="term" value="F:nickel cation binding"/>
    <property type="evidence" value="ECO:0007669"/>
    <property type="project" value="UniProtKB-UniRule"/>
</dbReference>
<dbReference type="GO" id="GO:0043419">
    <property type="term" value="P:urea catabolic process"/>
    <property type="evidence" value="ECO:0007669"/>
    <property type="project" value="InterPro"/>
</dbReference>
<dbReference type="CDD" id="cd05540">
    <property type="entry name" value="UreG"/>
    <property type="match status" value="1"/>
</dbReference>
<dbReference type="FunFam" id="3.40.50.300:FF:000208">
    <property type="entry name" value="Urease accessory protein UreG"/>
    <property type="match status" value="1"/>
</dbReference>
<dbReference type="Gene3D" id="3.40.50.300">
    <property type="entry name" value="P-loop containing nucleotide triphosphate hydrolases"/>
    <property type="match status" value="1"/>
</dbReference>
<dbReference type="HAMAP" id="MF_01389">
    <property type="entry name" value="UreG"/>
    <property type="match status" value="1"/>
</dbReference>
<dbReference type="InterPro" id="IPR003495">
    <property type="entry name" value="CobW/HypB/UreG_nucleotide-bd"/>
</dbReference>
<dbReference type="InterPro" id="IPR027417">
    <property type="entry name" value="P-loop_NTPase"/>
</dbReference>
<dbReference type="InterPro" id="IPR004400">
    <property type="entry name" value="UreG"/>
</dbReference>
<dbReference type="NCBIfam" id="TIGR00101">
    <property type="entry name" value="ureG"/>
    <property type="match status" value="1"/>
</dbReference>
<dbReference type="PANTHER" id="PTHR31715">
    <property type="entry name" value="UREASE ACCESSORY PROTEIN G"/>
    <property type="match status" value="1"/>
</dbReference>
<dbReference type="PANTHER" id="PTHR31715:SF0">
    <property type="entry name" value="UREASE ACCESSORY PROTEIN G"/>
    <property type="match status" value="1"/>
</dbReference>
<dbReference type="Pfam" id="PF02492">
    <property type="entry name" value="cobW"/>
    <property type="match status" value="1"/>
</dbReference>
<dbReference type="PIRSF" id="PIRSF005624">
    <property type="entry name" value="Ni-bind_GTPase"/>
    <property type="match status" value="1"/>
</dbReference>
<dbReference type="SUPFAM" id="SSF52540">
    <property type="entry name" value="P-loop containing nucleoside triphosphate hydrolases"/>
    <property type="match status" value="1"/>
</dbReference>
<accession>A1KBB1</accession>
<organism>
    <name type="scientific">Azoarcus sp. (strain BH72)</name>
    <dbReference type="NCBI Taxonomy" id="418699"/>
    <lineage>
        <taxon>Bacteria</taxon>
        <taxon>Pseudomonadati</taxon>
        <taxon>Pseudomonadota</taxon>
        <taxon>Betaproteobacteria</taxon>
        <taxon>Rhodocyclales</taxon>
        <taxon>Zoogloeaceae</taxon>
        <taxon>Azoarcus</taxon>
    </lineage>
</organism>
<protein>
    <recommendedName>
        <fullName evidence="1">Urease accessory protein UreG</fullName>
    </recommendedName>
</protein>